<accession>Q3JCY8</accession>
<gene>
    <name evidence="1" type="primary">pdxJ</name>
    <name type="ordered locus">Noc_0795</name>
</gene>
<comment type="function">
    <text evidence="1">Catalyzes the complicated ring closure reaction between the two acyclic compounds 1-deoxy-D-xylulose-5-phosphate (DXP) and 3-amino-2-oxopropyl phosphate (1-amino-acetone-3-phosphate or AAP) to form pyridoxine 5'-phosphate (PNP) and inorganic phosphate.</text>
</comment>
<comment type="catalytic activity">
    <reaction evidence="1">
        <text>3-amino-2-oxopropyl phosphate + 1-deoxy-D-xylulose 5-phosphate = pyridoxine 5'-phosphate + phosphate + 2 H2O + H(+)</text>
        <dbReference type="Rhea" id="RHEA:15265"/>
        <dbReference type="ChEBI" id="CHEBI:15377"/>
        <dbReference type="ChEBI" id="CHEBI:15378"/>
        <dbReference type="ChEBI" id="CHEBI:43474"/>
        <dbReference type="ChEBI" id="CHEBI:57279"/>
        <dbReference type="ChEBI" id="CHEBI:57792"/>
        <dbReference type="ChEBI" id="CHEBI:58589"/>
        <dbReference type="EC" id="2.6.99.2"/>
    </reaction>
</comment>
<comment type="pathway">
    <text evidence="1">Cofactor biosynthesis; pyridoxine 5'-phosphate biosynthesis; pyridoxine 5'-phosphate from D-erythrose 4-phosphate: step 5/5.</text>
</comment>
<comment type="subunit">
    <text evidence="1">Homooctamer; tetramer of dimers.</text>
</comment>
<comment type="subcellular location">
    <subcellularLocation>
        <location evidence="1">Cytoplasm</location>
    </subcellularLocation>
</comment>
<comment type="similarity">
    <text evidence="1">Belongs to the PNP synthase family.</text>
</comment>
<keyword id="KW-0963">Cytoplasm</keyword>
<keyword id="KW-0664">Pyridoxine biosynthesis</keyword>
<keyword id="KW-1185">Reference proteome</keyword>
<keyword id="KW-0808">Transferase</keyword>
<evidence type="ECO:0000255" key="1">
    <source>
        <dbReference type="HAMAP-Rule" id="MF_00279"/>
    </source>
</evidence>
<organism>
    <name type="scientific">Nitrosococcus oceani (strain ATCC 19707 / BCRC 17464 / JCM 30415 / NCIMB 11848 / C-107)</name>
    <dbReference type="NCBI Taxonomy" id="323261"/>
    <lineage>
        <taxon>Bacteria</taxon>
        <taxon>Pseudomonadati</taxon>
        <taxon>Pseudomonadota</taxon>
        <taxon>Gammaproteobacteria</taxon>
        <taxon>Chromatiales</taxon>
        <taxon>Chromatiaceae</taxon>
        <taxon>Nitrosococcus</taxon>
    </lineage>
</organism>
<feature type="chain" id="PRO_0000231820" description="Pyridoxine 5'-phosphate synthase">
    <location>
        <begin position="1"/>
        <end position="246"/>
    </location>
</feature>
<feature type="active site" description="Proton acceptor" evidence="1">
    <location>
        <position position="48"/>
    </location>
</feature>
<feature type="active site" description="Proton acceptor" evidence="1">
    <location>
        <position position="75"/>
    </location>
</feature>
<feature type="active site" description="Proton donor" evidence="1">
    <location>
        <position position="196"/>
    </location>
</feature>
<feature type="binding site" evidence="1">
    <location>
        <position position="12"/>
    </location>
    <ligand>
        <name>3-amino-2-oxopropyl phosphate</name>
        <dbReference type="ChEBI" id="CHEBI:57279"/>
    </ligand>
</feature>
<feature type="binding site" evidence="1">
    <location>
        <begin position="14"/>
        <end position="15"/>
    </location>
    <ligand>
        <name>1-deoxy-D-xylulose 5-phosphate</name>
        <dbReference type="ChEBI" id="CHEBI:57792"/>
    </ligand>
</feature>
<feature type="binding site" evidence="1">
    <location>
        <position position="23"/>
    </location>
    <ligand>
        <name>3-amino-2-oxopropyl phosphate</name>
        <dbReference type="ChEBI" id="CHEBI:57279"/>
    </ligand>
</feature>
<feature type="binding site" evidence="1">
    <location>
        <position position="50"/>
    </location>
    <ligand>
        <name>1-deoxy-D-xylulose 5-phosphate</name>
        <dbReference type="ChEBI" id="CHEBI:57792"/>
    </ligand>
</feature>
<feature type="binding site" evidence="1">
    <location>
        <position position="55"/>
    </location>
    <ligand>
        <name>1-deoxy-D-xylulose 5-phosphate</name>
        <dbReference type="ChEBI" id="CHEBI:57792"/>
    </ligand>
</feature>
<feature type="binding site" evidence="1">
    <location>
        <position position="105"/>
    </location>
    <ligand>
        <name>1-deoxy-D-xylulose 5-phosphate</name>
        <dbReference type="ChEBI" id="CHEBI:57792"/>
    </ligand>
</feature>
<feature type="binding site" evidence="1">
    <location>
        <position position="197"/>
    </location>
    <ligand>
        <name>3-amino-2-oxopropyl phosphate</name>
        <dbReference type="ChEBI" id="CHEBI:57279"/>
    </ligand>
</feature>
<feature type="binding site" evidence="1">
    <location>
        <begin position="218"/>
        <end position="219"/>
    </location>
    <ligand>
        <name>3-amino-2-oxopropyl phosphate</name>
        <dbReference type="ChEBI" id="CHEBI:57279"/>
    </ligand>
</feature>
<feature type="site" description="Transition state stabilizer" evidence="1">
    <location>
        <position position="156"/>
    </location>
</feature>
<reference key="1">
    <citation type="journal article" date="2006" name="Appl. Environ. Microbiol.">
        <title>Complete genome sequence of the marine, chemolithoautotrophic, ammonia-oxidizing bacterium Nitrosococcus oceani ATCC 19707.</title>
        <authorList>
            <person name="Klotz M.G."/>
            <person name="Arp D.J."/>
            <person name="Chain P.S.G."/>
            <person name="El-Sheikh A.F."/>
            <person name="Hauser L.J."/>
            <person name="Hommes N.G."/>
            <person name="Larimer F.W."/>
            <person name="Malfatti S.A."/>
            <person name="Norton J.M."/>
            <person name="Poret-Peterson A.T."/>
            <person name="Vergez L.M."/>
            <person name="Ward B.B."/>
        </authorList>
    </citation>
    <scope>NUCLEOTIDE SEQUENCE [LARGE SCALE GENOMIC DNA]</scope>
    <source>
        <strain>ATCC 19707 / BCRC 17464 / JCM 30415 / NCIMB 11848 / C-107</strain>
    </source>
</reference>
<name>PDXJ_NITOC</name>
<proteinExistence type="inferred from homology"/>
<dbReference type="EC" id="2.6.99.2" evidence="1"/>
<dbReference type="EMBL" id="CP000127">
    <property type="protein sequence ID" value="ABA57308.1"/>
    <property type="molecule type" value="Genomic_DNA"/>
</dbReference>
<dbReference type="RefSeq" id="WP_002811389.1">
    <property type="nucleotide sequence ID" value="NC_007484.1"/>
</dbReference>
<dbReference type="SMR" id="Q3JCY8"/>
<dbReference type="FunCoup" id="Q3JCY8">
    <property type="interactions" value="359"/>
</dbReference>
<dbReference type="STRING" id="323261.Noc_0795"/>
<dbReference type="KEGG" id="noc:Noc_0795"/>
<dbReference type="eggNOG" id="COG0854">
    <property type="taxonomic scope" value="Bacteria"/>
</dbReference>
<dbReference type="HOGENOM" id="CLU_074563_0_0_6"/>
<dbReference type="InParanoid" id="Q3JCY8"/>
<dbReference type="UniPathway" id="UPA00244">
    <property type="reaction ID" value="UER00313"/>
</dbReference>
<dbReference type="Proteomes" id="UP000006838">
    <property type="component" value="Chromosome"/>
</dbReference>
<dbReference type="GO" id="GO:0005829">
    <property type="term" value="C:cytosol"/>
    <property type="evidence" value="ECO:0007669"/>
    <property type="project" value="TreeGrafter"/>
</dbReference>
<dbReference type="GO" id="GO:0033856">
    <property type="term" value="F:pyridoxine 5'-phosphate synthase activity"/>
    <property type="evidence" value="ECO:0007669"/>
    <property type="project" value="UniProtKB-EC"/>
</dbReference>
<dbReference type="GO" id="GO:0008615">
    <property type="term" value="P:pyridoxine biosynthetic process"/>
    <property type="evidence" value="ECO:0007669"/>
    <property type="project" value="UniProtKB-UniRule"/>
</dbReference>
<dbReference type="CDD" id="cd00003">
    <property type="entry name" value="PNPsynthase"/>
    <property type="match status" value="1"/>
</dbReference>
<dbReference type="FunFam" id="3.20.20.70:FF:000042">
    <property type="entry name" value="Pyridoxine 5'-phosphate synthase"/>
    <property type="match status" value="1"/>
</dbReference>
<dbReference type="Gene3D" id="3.20.20.70">
    <property type="entry name" value="Aldolase class I"/>
    <property type="match status" value="1"/>
</dbReference>
<dbReference type="HAMAP" id="MF_00279">
    <property type="entry name" value="PdxJ"/>
    <property type="match status" value="1"/>
</dbReference>
<dbReference type="InterPro" id="IPR013785">
    <property type="entry name" value="Aldolase_TIM"/>
</dbReference>
<dbReference type="InterPro" id="IPR004569">
    <property type="entry name" value="PyrdxlP_synth_PdxJ"/>
</dbReference>
<dbReference type="InterPro" id="IPR036130">
    <property type="entry name" value="Pyridoxine-5'_phos_synth"/>
</dbReference>
<dbReference type="NCBIfam" id="TIGR00559">
    <property type="entry name" value="pdxJ"/>
    <property type="match status" value="1"/>
</dbReference>
<dbReference type="NCBIfam" id="NF003623">
    <property type="entry name" value="PRK05265.1-1"/>
    <property type="match status" value="1"/>
</dbReference>
<dbReference type="NCBIfam" id="NF003625">
    <property type="entry name" value="PRK05265.1-3"/>
    <property type="match status" value="1"/>
</dbReference>
<dbReference type="NCBIfam" id="NF003627">
    <property type="entry name" value="PRK05265.1-5"/>
    <property type="match status" value="1"/>
</dbReference>
<dbReference type="PANTHER" id="PTHR30456">
    <property type="entry name" value="PYRIDOXINE 5'-PHOSPHATE SYNTHASE"/>
    <property type="match status" value="1"/>
</dbReference>
<dbReference type="PANTHER" id="PTHR30456:SF0">
    <property type="entry name" value="PYRIDOXINE 5'-PHOSPHATE SYNTHASE"/>
    <property type="match status" value="1"/>
</dbReference>
<dbReference type="Pfam" id="PF03740">
    <property type="entry name" value="PdxJ"/>
    <property type="match status" value="1"/>
</dbReference>
<dbReference type="SUPFAM" id="SSF63892">
    <property type="entry name" value="Pyridoxine 5'-phosphate synthase"/>
    <property type="match status" value="1"/>
</dbReference>
<protein>
    <recommendedName>
        <fullName evidence="1">Pyridoxine 5'-phosphate synthase</fullName>
        <shortName evidence="1">PNP synthase</shortName>
        <ecNumber evidence="1">2.6.99.2</ecNumber>
    </recommendedName>
</protein>
<sequence length="246" mass="27112">MIASHAILLGVNIDHVATLRQARGTRYPDPIQAAIEAEQAGADGITLHLREDRRHIQERDVALLRDVLVSKMNLEMAVTGEMLAIAEKYCPEDCCLVPERREELTTEGGLNVTGQLARITEACVRLKEAGTRVSLFIDADPRQVEAAAQANAPVIEIHTGHFADARDERNRRKEFQRIVEAVKRGREVGLQVNAGHGLNYQNVAAIAALSDIVELNIGHAIIARALFTGMQSAVGEMKRLMREARE</sequence>